<evidence type="ECO:0000255" key="1">
    <source>
        <dbReference type="HAMAP-Rule" id="MF_01365"/>
    </source>
</evidence>
<evidence type="ECO:0000305" key="2"/>
<organism>
    <name type="scientific">Cereibacter sphaeroides (strain ATCC 17023 / DSM 158 / JCM 6121 / CCUG 31486 / LMG 2827 / NBRC 12203 / NCIMB 8253 / ATH 2.4.1.)</name>
    <name type="common">Rhodobacter sphaeroides</name>
    <dbReference type="NCBI Taxonomy" id="272943"/>
    <lineage>
        <taxon>Bacteria</taxon>
        <taxon>Pseudomonadati</taxon>
        <taxon>Pseudomonadota</taxon>
        <taxon>Alphaproteobacteria</taxon>
        <taxon>Rhodobacterales</taxon>
        <taxon>Paracoccaceae</taxon>
        <taxon>Cereibacter</taxon>
    </lineage>
</organism>
<proteinExistence type="inferred from homology"/>
<reference key="1">
    <citation type="submission" date="2005-09" db="EMBL/GenBank/DDBJ databases">
        <title>Complete sequence of chromosome 1 of Rhodobacter sphaeroides 2.4.1.</title>
        <authorList>
            <person name="Copeland A."/>
            <person name="Lucas S."/>
            <person name="Lapidus A."/>
            <person name="Barry K."/>
            <person name="Detter J.C."/>
            <person name="Glavina T."/>
            <person name="Hammon N."/>
            <person name="Israni S."/>
            <person name="Pitluck S."/>
            <person name="Richardson P."/>
            <person name="Mackenzie C."/>
            <person name="Choudhary M."/>
            <person name="Larimer F."/>
            <person name="Hauser L.J."/>
            <person name="Land M."/>
            <person name="Donohue T.J."/>
            <person name="Kaplan S."/>
        </authorList>
    </citation>
    <scope>NUCLEOTIDE SEQUENCE [LARGE SCALE GENOMIC DNA]</scope>
    <source>
        <strain>ATCC 17023 / DSM 158 / JCM 6121 / CCUG 31486 / LMG 2827 / NBRC 12203 / NCIMB 8253 / ATH 2.4.1.</strain>
    </source>
</reference>
<accession>Q3J5Q7</accession>
<gene>
    <name evidence="1" type="primary">rplF</name>
    <name type="ordered locus">RHOS4_03090</name>
    <name type="ORF">RSP_1730</name>
</gene>
<name>RL6_CERS4</name>
<sequence>MSRIGKKPVPLPKGVTASISGQSIEVKGPKGTRSFSATDDVTLALDEGSVKVTPRGTSKRARQQWGMVRSQVENLVTGVTSGFKKELEISGVGYRAQMAGNVLKLSLGYSHDVNFEVPAGVTVTTPKQTEITVEGIDQQLVGQVAANIREWRRPEPYKGKGIRYKDEFIFRKEGKKK</sequence>
<keyword id="KW-1185">Reference proteome</keyword>
<keyword id="KW-0687">Ribonucleoprotein</keyword>
<keyword id="KW-0689">Ribosomal protein</keyword>
<keyword id="KW-0694">RNA-binding</keyword>
<keyword id="KW-0699">rRNA-binding</keyword>
<feature type="chain" id="PRO_0000265284" description="Large ribosomal subunit protein uL6">
    <location>
        <begin position="1"/>
        <end position="177"/>
    </location>
</feature>
<dbReference type="EMBL" id="CP000143">
    <property type="protein sequence ID" value="ABA77877.1"/>
    <property type="molecule type" value="Genomic_DNA"/>
</dbReference>
<dbReference type="RefSeq" id="WP_002722518.1">
    <property type="nucleotide sequence ID" value="NZ_CP030271.1"/>
</dbReference>
<dbReference type="RefSeq" id="YP_351778.1">
    <property type="nucleotide sequence ID" value="NC_007493.2"/>
</dbReference>
<dbReference type="SMR" id="Q3J5Q7"/>
<dbReference type="STRING" id="272943.RSP_1730"/>
<dbReference type="EnsemblBacteria" id="ABA77877">
    <property type="protein sequence ID" value="ABA77877"/>
    <property type="gene ID" value="RSP_1730"/>
</dbReference>
<dbReference type="GeneID" id="67445515"/>
<dbReference type="KEGG" id="rsp:RSP_1730"/>
<dbReference type="PATRIC" id="fig|272943.9.peg.608"/>
<dbReference type="eggNOG" id="COG0097">
    <property type="taxonomic scope" value="Bacteria"/>
</dbReference>
<dbReference type="OrthoDB" id="9805007at2"/>
<dbReference type="PhylomeDB" id="Q3J5Q7"/>
<dbReference type="Proteomes" id="UP000002703">
    <property type="component" value="Chromosome 1"/>
</dbReference>
<dbReference type="GO" id="GO:0022625">
    <property type="term" value="C:cytosolic large ribosomal subunit"/>
    <property type="evidence" value="ECO:0007669"/>
    <property type="project" value="TreeGrafter"/>
</dbReference>
<dbReference type="GO" id="GO:0019843">
    <property type="term" value="F:rRNA binding"/>
    <property type="evidence" value="ECO:0007669"/>
    <property type="project" value="UniProtKB-UniRule"/>
</dbReference>
<dbReference type="GO" id="GO:0003735">
    <property type="term" value="F:structural constituent of ribosome"/>
    <property type="evidence" value="ECO:0007669"/>
    <property type="project" value="InterPro"/>
</dbReference>
<dbReference type="GO" id="GO:0002181">
    <property type="term" value="P:cytoplasmic translation"/>
    <property type="evidence" value="ECO:0007669"/>
    <property type="project" value="TreeGrafter"/>
</dbReference>
<dbReference type="FunFam" id="3.90.930.12:FF:000001">
    <property type="entry name" value="50S ribosomal protein L6"/>
    <property type="match status" value="1"/>
</dbReference>
<dbReference type="Gene3D" id="3.90.930.12">
    <property type="entry name" value="Ribosomal protein L6, alpha-beta domain"/>
    <property type="match status" value="2"/>
</dbReference>
<dbReference type="HAMAP" id="MF_01365_B">
    <property type="entry name" value="Ribosomal_uL6_B"/>
    <property type="match status" value="1"/>
</dbReference>
<dbReference type="InterPro" id="IPR000702">
    <property type="entry name" value="Ribosomal_uL6-like"/>
</dbReference>
<dbReference type="InterPro" id="IPR036789">
    <property type="entry name" value="Ribosomal_uL6-like_a/b-dom_sf"/>
</dbReference>
<dbReference type="InterPro" id="IPR020040">
    <property type="entry name" value="Ribosomal_uL6_a/b-dom"/>
</dbReference>
<dbReference type="InterPro" id="IPR019906">
    <property type="entry name" value="Ribosomal_uL6_bac-type"/>
</dbReference>
<dbReference type="InterPro" id="IPR002358">
    <property type="entry name" value="Ribosomal_uL6_CS"/>
</dbReference>
<dbReference type="NCBIfam" id="TIGR03654">
    <property type="entry name" value="L6_bact"/>
    <property type="match status" value="1"/>
</dbReference>
<dbReference type="PANTHER" id="PTHR11655">
    <property type="entry name" value="60S/50S RIBOSOMAL PROTEIN L6/L9"/>
    <property type="match status" value="1"/>
</dbReference>
<dbReference type="PANTHER" id="PTHR11655:SF14">
    <property type="entry name" value="LARGE RIBOSOMAL SUBUNIT PROTEIN UL6M"/>
    <property type="match status" value="1"/>
</dbReference>
<dbReference type="Pfam" id="PF00347">
    <property type="entry name" value="Ribosomal_L6"/>
    <property type="match status" value="2"/>
</dbReference>
<dbReference type="PIRSF" id="PIRSF002162">
    <property type="entry name" value="Ribosomal_L6"/>
    <property type="match status" value="1"/>
</dbReference>
<dbReference type="PRINTS" id="PR00059">
    <property type="entry name" value="RIBOSOMALL6"/>
</dbReference>
<dbReference type="SUPFAM" id="SSF56053">
    <property type="entry name" value="Ribosomal protein L6"/>
    <property type="match status" value="2"/>
</dbReference>
<dbReference type="PROSITE" id="PS00525">
    <property type="entry name" value="RIBOSOMAL_L6_1"/>
    <property type="match status" value="1"/>
</dbReference>
<comment type="function">
    <text evidence="1">This protein binds to the 23S rRNA, and is important in its secondary structure. It is located near the subunit interface in the base of the L7/L12 stalk, and near the tRNA binding site of the peptidyltransferase center.</text>
</comment>
<comment type="subunit">
    <text evidence="1">Part of the 50S ribosomal subunit.</text>
</comment>
<comment type="similarity">
    <text evidence="1">Belongs to the universal ribosomal protein uL6 family.</text>
</comment>
<protein>
    <recommendedName>
        <fullName evidence="1">Large ribosomal subunit protein uL6</fullName>
    </recommendedName>
    <alternativeName>
        <fullName evidence="2">50S ribosomal protein L6</fullName>
    </alternativeName>
</protein>